<feature type="chain" id="PRO_1000043229" description="Pantothenate kinase">
    <location>
        <begin position="1"/>
        <end position="312"/>
    </location>
</feature>
<feature type="binding site" evidence="1">
    <location>
        <begin position="97"/>
        <end position="104"/>
    </location>
    <ligand>
        <name>ATP</name>
        <dbReference type="ChEBI" id="CHEBI:30616"/>
    </ligand>
</feature>
<dbReference type="EC" id="2.7.1.33" evidence="1"/>
<dbReference type="EMBL" id="CP000580">
    <property type="protein sequence ID" value="ABO00136.1"/>
    <property type="molecule type" value="Genomic_DNA"/>
</dbReference>
<dbReference type="SMR" id="A3Q4Q8"/>
<dbReference type="KEGG" id="mjl:Mjls_4364"/>
<dbReference type="HOGENOM" id="CLU_053818_1_1_11"/>
<dbReference type="BioCyc" id="MSP164757:G1G8C-4405-MONOMER"/>
<dbReference type="UniPathway" id="UPA00241">
    <property type="reaction ID" value="UER00352"/>
</dbReference>
<dbReference type="GO" id="GO:0005737">
    <property type="term" value="C:cytoplasm"/>
    <property type="evidence" value="ECO:0007669"/>
    <property type="project" value="UniProtKB-SubCell"/>
</dbReference>
<dbReference type="GO" id="GO:0005524">
    <property type="term" value="F:ATP binding"/>
    <property type="evidence" value="ECO:0007669"/>
    <property type="project" value="UniProtKB-UniRule"/>
</dbReference>
<dbReference type="GO" id="GO:0004594">
    <property type="term" value="F:pantothenate kinase activity"/>
    <property type="evidence" value="ECO:0007669"/>
    <property type="project" value="UniProtKB-UniRule"/>
</dbReference>
<dbReference type="GO" id="GO:0015937">
    <property type="term" value="P:coenzyme A biosynthetic process"/>
    <property type="evidence" value="ECO:0007669"/>
    <property type="project" value="UniProtKB-UniRule"/>
</dbReference>
<dbReference type="CDD" id="cd02025">
    <property type="entry name" value="PanK"/>
    <property type="match status" value="1"/>
</dbReference>
<dbReference type="FunFam" id="3.40.50.300:FF:000242">
    <property type="entry name" value="Pantothenate kinase"/>
    <property type="match status" value="1"/>
</dbReference>
<dbReference type="Gene3D" id="3.40.50.300">
    <property type="entry name" value="P-loop containing nucleotide triphosphate hydrolases"/>
    <property type="match status" value="1"/>
</dbReference>
<dbReference type="HAMAP" id="MF_00215">
    <property type="entry name" value="Pantothen_kinase_1"/>
    <property type="match status" value="1"/>
</dbReference>
<dbReference type="InterPro" id="IPR027417">
    <property type="entry name" value="P-loop_NTPase"/>
</dbReference>
<dbReference type="InterPro" id="IPR004566">
    <property type="entry name" value="PanK"/>
</dbReference>
<dbReference type="InterPro" id="IPR006083">
    <property type="entry name" value="PRK/URK"/>
</dbReference>
<dbReference type="NCBIfam" id="TIGR00554">
    <property type="entry name" value="panK_bact"/>
    <property type="match status" value="1"/>
</dbReference>
<dbReference type="PANTHER" id="PTHR10285">
    <property type="entry name" value="URIDINE KINASE"/>
    <property type="match status" value="1"/>
</dbReference>
<dbReference type="Pfam" id="PF00485">
    <property type="entry name" value="PRK"/>
    <property type="match status" value="1"/>
</dbReference>
<dbReference type="PIRSF" id="PIRSF000545">
    <property type="entry name" value="Pantothenate_kin"/>
    <property type="match status" value="1"/>
</dbReference>
<dbReference type="SUPFAM" id="SSF52540">
    <property type="entry name" value="P-loop containing nucleoside triphosphate hydrolases"/>
    <property type="match status" value="1"/>
</dbReference>
<name>COAA_MYCSJ</name>
<reference key="1">
    <citation type="submission" date="2007-02" db="EMBL/GenBank/DDBJ databases">
        <title>Complete sequence of Mycobacterium sp. JLS.</title>
        <authorList>
            <consortium name="US DOE Joint Genome Institute"/>
            <person name="Copeland A."/>
            <person name="Lucas S."/>
            <person name="Lapidus A."/>
            <person name="Barry K."/>
            <person name="Detter J.C."/>
            <person name="Glavina del Rio T."/>
            <person name="Hammon N."/>
            <person name="Israni S."/>
            <person name="Dalin E."/>
            <person name="Tice H."/>
            <person name="Pitluck S."/>
            <person name="Chain P."/>
            <person name="Malfatti S."/>
            <person name="Shin M."/>
            <person name="Vergez L."/>
            <person name="Schmutz J."/>
            <person name="Larimer F."/>
            <person name="Land M."/>
            <person name="Hauser L."/>
            <person name="Kyrpides N."/>
            <person name="Mikhailova N."/>
            <person name="Miller C.D."/>
            <person name="Anderson A.J."/>
            <person name="Sims R.C."/>
            <person name="Richardson P."/>
        </authorList>
    </citation>
    <scope>NUCLEOTIDE SEQUENCE [LARGE SCALE GENOMIC DNA]</scope>
    <source>
        <strain>JLS</strain>
    </source>
</reference>
<keyword id="KW-0067">ATP-binding</keyword>
<keyword id="KW-0173">Coenzyme A biosynthesis</keyword>
<keyword id="KW-0963">Cytoplasm</keyword>
<keyword id="KW-0418">Kinase</keyword>
<keyword id="KW-0547">Nucleotide-binding</keyword>
<keyword id="KW-0808">Transferase</keyword>
<gene>
    <name evidence="1" type="primary">coaA</name>
    <name type="ordered locus">Mjls_4364</name>
</gene>
<proteinExistence type="inferred from homology"/>
<comment type="catalytic activity">
    <reaction evidence="1">
        <text>(R)-pantothenate + ATP = (R)-4'-phosphopantothenate + ADP + H(+)</text>
        <dbReference type="Rhea" id="RHEA:16373"/>
        <dbReference type="ChEBI" id="CHEBI:10986"/>
        <dbReference type="ChEBI" id="CHEBI:15378"/>
        <dbReference type="ChEBI" id="CHEBI:29032"/>
        <dbReference type="ChEBI" id="CHEBI:30616"/>
        <dbReference type="ChEBI" id="CHEBI:456216"/>
        <dbReference type="EC" id="2.7.1.33"/>
    </reaction>
</comment>
<comment type="pathway">
    <text evidence="1">Cofactor biosynthesis; coenzyme A biosynthesis; CoA from (R)-pantothenate: step 1/5.</text>
</comment>
<comment type="subcellular location">
    <subcellularLocation>
        <location evidence="1">Cytoplasm</location>
    </subcellularLocation>
</comment>
<comment type="similarity">
    <text evidence="1">Belongs to the prokaryotic pantothenate kinase family.</text>
</comment>
<organism>
    <name type="scientific">Mycobacterium sp. (strain JLS)</name>
    <dbReference type="NCBI Taxonomy" id="164757"/>
    <lineage>
        <taxon>Bacteria</taxon>
        <taxon>Bacillati</taxon>
        <taxon>Actinomycetota</taxon>
        <taxon>Actinomycetes</taxon>
        <taxon>Mycobacteriales</taxon>
        <taxon>Mycobacteriaceae</taxon>
        <taxon>Mycobacterium</taxon>
    </lineage>
</organism>
<sequence length="312" mass="35477">MARLSEPSPYVEFDRTQWRALRMSTPLKLTEDELKKLRGLGEKLDLLEVEEVYLPLARLIHLQVAARQRLFAATSEFLGEPQQNPDRPVPFIIGVAGSVAVGKSTTARVLQALLARWGNHARVDLVTTDGFLYPNAELGRRNIMHRKGFPESYDRRALMRFVTAVKSGADYACAPVYSHLLYDIVPGEKQVIRHPDILILEGLNVLQTGPALMVSDLFDFSVYVDARLEDIEGWYISRFLTMRSTAFADPASHFHHYATLTDEQAVFAARDIWHSINRPNLIENILPTRPRATLVLRKDADHAINRLRLRKL</sequence>
<evidence type="ECO:0000255" key="1">
    <source>
        <dbReference type="HAMAP-Rule" id="MF_00215"/>
    </source>
</evidence>
<protein>
    <recommendedName>
        <fullName evidence="1">Pantothenate kinase</fullName>
        <ecNumber evidence="1">2.7.1.33</ecNumber>
    </recommendedName>
    <alternativeName>
        <fullName evidence="1">Pantothenic acid kinase</fullName>
    </alternativeName>
</protein>
<accession>A3Q4Q8</accession>